<organism>
    <name type="scientific">Enterobacter sp. (strain 638)</name>
    <dbReference type="NCBI Taxonomy" id="399742"/>
    <lineage>
        <taxon>Bacteria</taxon>
        <taxon>Pseudomonadati</taxon>
        <taxon>Pseudomonadota</taxon>
        <taxon>Gammaproteobacteria</taxon>
        <taxon>Enterobacterales</taxon>
        <taxon>Enterobacteriaceae</taxon>
        <taxon>Enterobacter</taxon>
    </lineage>
</organism>
<feature type="chain" id="PRO_1000059252" description="Potassium-transporting ATPase ATP-binding subunit">
    <location>
        <begin position="1"/>
        <end position="682"/>
    </location>
</feature>
<feature type="transmembrane region" description="Helical" evidence="1">
    <location>
        <begin position="34"/>
        <end position="54"/>
    </location>
</feature>
<feature type="transmembrane region" description="Helical" evidence="1">
    <location>
        <begin position="62"/>
        <end position="82"/>
    </location>
</feature>
<feature type="transmembrane region" description="Helical" evidence="1">
    <location>
        <begin position="219"/>
        <end position="239"/>
    </location>
</feature>
<feature type="transmembrane region" description="Helical" evidence="1">
    <location>
        <begin position="254"/>
        <end position="274"/>
    </location>
</feature>
<feature type="transmembrane region" description="Helical" evidence="1">
    <location>
        <begin position="588"/>
        <end position="608"/>
    </location>
</feature>
<feature type="transmembrane region" description="Helical" evidence="1">
    <location>
        <begin position="616"/>
        <end position="636"/>
    </location>
</feature>
<feature type="transmembrane region" description="Helical" evidence="1">
    <location>
        <begin position="662"/>
        <end position="682"/>
    </location>
</feature>
<feature type="active site" description="4-aspartylphosphate intermediate" evidence="1">
    <location>
        <position position="307"/>
    </location>
</feature>
<feature type="binding site" evidence="1">
    <location>
        <position position="344"/>
    </location>
    <ligand>
        <name>ATP</name>
        <dbReference type="ChEBI" id="CHEBI:30616"/>
    </ligand>
</feature>
<feature type="binding site" evidence="1">
    <location>
        <position position="348"/>
    </location>
    <ligand>
        <name>ATP</name>
        <dbReference type="ChEBI" id="CHEBI:30616"/>
    </ligand>
</feature>
<feature type="binding site" evidence="1">
    <location>
        <begin position="377"/>
        <end position="384"/>
    </location>
    <ligand>
        <name>ATP</name>
        <dbReference type="ChEBI" id="CHEBI:30616"/>
    </ligand>
</feature>
<feature type="binding site" evidence="1">
    <location>
        <position position="395"/>
    </location>
    <ligand>
        <name>ATP</name>
        <dbReference type="ChEBI" id="CHEBI:30616"/>
    </ligand>
</feature>
<feature type="binding site" evidence="1">
    <location>
        <position position="518"/>
    </location>
    <ligand>
        <name>Mg(2+)</name>
        <dbReference type="ChEBI" id="CHEBI:18420"/>
    </ligand>
</feature>
<feature type="binding site" evidence="1">
    <location>
        <position position="522"/>
    </location>
    <ligand>
        <name>Mg(2+)</name>
        <dbReference type="ChEBI" id="CHEBI:18420"/>
    </ligand>
</feature>
<dbReference type="EC" id="7.2.2.6" evidence="1"/>
<dbReference type="EMBL" id="CP000653">
    <property type="protein sequence ID" value="ABP59890.1"/>
    <property type="molecule type" value="Genomic_DNA"/>
</dbReference>
<dbReference type="RefSeq" id="WP_012016609.1">
    <property type="nucleotide sequence ID" value="NC_009436.1"/>
</dbReference>
<dbReference type="SMR" id="A4W860"/>
<dbReference type="STRING" id="399742.Ent638_1209"/>
<dbReference type="KEGG" id="ent:Ent638_1209"/>
<dbReference type="eggNOG" id="COG2216">
    <property type="taxonomic scope" value="Bacteria"/>
</dbReference>
<dbReference type="HOGENOM" id="CLU_025728_2_0_6"/>
<dbReference type="OrthoDB" id="9814270at2"/>
<dbReference type="Proteomes" id="UP000000230">
    <property type="component" value="Chromosome"/>
</dbReference>
<dbReference type="GO" id="GO:0005886">
    <property type="term" value="C:plasma membrane"/>
    <property type="evidence" value="ECO:0007669"/>
    <property type="project" value="UniProtKB-SubCell"/>
</dbReference>
<dbReference type="GO" id="GO:0005524">
    <property type="term" value="F:ATP binding"/>
    <property type="evidence" value="ECO:0007669"/>
    <property type="project" value="UniProtKB-UniRule"/>
</dbReference>
<dbReference type="GO" id="GO:0016887">
    <property type="term" value="F:ATP hydrolysis activity"/>
    <property type="evidence" value="ECO:0007669"/>
    <property type="project" value="InterPro"/>
</dbReference>
<dbReference type="GO" id="GO:0000287">
    <property type="term" value="F:magnesium ion binding"/>
    <property type="evidence" value="ECO:0007669"/>
    <property type="project" value="UniProtKB-UniRule"/>
</dbReference>
<dbReference type="GO" id="GO:0008556">
    <property type="term" value="F:P-type potassium transmembrane transporter activity"/>
    <property type="evidence" value="ECO:0007669"/>
    <property type="project" value="UniProtKB-UniRule"/>
</dbReference>
<dbReference type="CDD" id="cd02078">
    <property type="entry name" value="P-type_ATPase_K"/>
    <property type="match status" value="1"/>
</dbReference>
<dbReference type="FunFam" id="2.70.150.10:FF:000010">
    <property type="entry name" value="Potassium-transporting ATPase ATP-binding subunit"/>
    <property type="match status" value="1"/>
</dbReference>
<dbReference type="FunFam" id="3.40.1110.10:FF:000007">
    <property type="entry name" value="Potassium-transporting ATPase ATP-binding subunit"/>
    <property type="match status" value="1"/>
</dbReference>
<dbReference type="Gene3D" id="3.40.1110.10">
    <property type="entry name" value="Calcium-transporting ATPase, cytoplasmic domain N"/>
    <property type="match status" value="1"/>
</dbReference>
<dbReference type="Gene3D" id="2.70.150.10">
    <property type="entry name" value="Calcium-transporting ATPase, cytoplasmic transduction domain A"/>
    <property type="match status" value="1"/>
</dbReference>
<dbReference type="Gene3D" id="3.40.50.1000">
    <property type="entry name" value="HAD superfamily/HAD-like"/>
    <property type="match status" value="1"/>
</dbReference>
<dbReference type="HAMAP" id="MF_00285">
    <property type="entry name" value="KdpB"/>
    <property type="match status" value="1"/>
</dbReference>
<dbReference type="InterPro" id="IPR023299">
    <property type="entry name" value="ATPase_P-typ_cyto_dom_N"/>
</dbReference>
<dbReference type="InterPro" id="IPR018303">
    <property type="entry name" value="ATPase_P-typ_P_site"/>
</dbReference>
<dbReference type="InterPro" id="IPR023298">
    <property type="entry name" value="ATPase_P-typ_TM_dom_sf"/>
</dbReference>
<dbReference type="InterPro" id="IPR008250">
    <property type="entry name" value="ATPase_P-typ_transduc_dom_A_sf"/>
</dbReference>
<dbReference type="InterPro" id="IPR036412">
    <property type="entry name" value="HAD-like_sf"/>
</dbReference>
<dbReference type="InterPro" id="IPR023214">
    <property type="entry name" value="HAD_sf"/>
</dbReference>
<dbReference type="InterPro" id="IPR006391">
    <property type="entry name" value="P-type_ATPase_bsu_IA"/>
</dbReference>
<dbReference type="InterPro" id="IPR001757">
    <property type="entry name" value="P_typ_ATPase"/>
</dbReference>
<dbReference type="InterPro" id="IPR044492">
    <property type="entry name" value="P_typ_ATPase_HD_dom"/>
</dbReference>
<dbReference type="NCBIfam" id="TIGR01494">
    <property type="entry name" value="ATPase_P-type"/>
    <property type="match status" value="2"/>
</dbReference>
<dbReference type="NCBIfam" id="TIGR01497">
    <property type="entry name" value="kdpB"/>
    <property type="match status" value="1"/>
</dbReference>
<dbReference type="PANTHER" id="PTHR43743">
    <property type="entry name" value="POTASSIUM-TRANSPORTING ATPASE ATP-BINDING SUBUNIT"/>
    <property type="match status" value="1"/>
</dbReference>
<dbReference type="PANTHER" id="PTHR43743:SF1">
    <property type="entry name" value="POTASSIUM-TRANSPORTING ATPASE ATP-BINDING SUBUNIT"/>
    <property type="match status" value="1"/>
</dbReference>
<dbReference type="Pfam" id="PF00122">
    <property type="entry name" value="E1-E2_ATPase"/>
    <property type="match status" value="1"/>
</dbReference>
<dbReference type="Pfam" id="PF00702">
    <property type="entry name" value="Hydrolase"/>
    <property type="match status" value="1"/>
</dbReference>
<dbReference type="PRINTS" id="PR00119">
    <property type="entry name" value="CATATPASE"/>
</dbReference>
<dbReference type="SFLD" id="SFLDG00002">
    <property type="entry name" value="C1.7:_P-type_atpase_like"/>
    <property type="match status" value="1"/>
</dbReference>
<dbReference type="SFLD" id="SFLDF00027">
    <property type="entry name" value="p-type_atpase"/>
    <property type="match status" value="1"/>
</dbReference>
<dbReference type="SUPFAM" id="SSF81653">
    <property type="entry name" value="Calcium ATPase, transduction domain A"/>
    <property type="match status" value="1"/>
</dbReference>
<dbReference type="SUPFAM" id="SSF81665">
    <property type="entry name" value="Calcium ATPase, transmembrane domain M"/>
    <property type="match status" value="1"/>
</dbReference>
<dbReference type="SUPFAM" id="SSF56784">
    <property type="entry name" value="HAD-like"/>
    <property type="match status" value="1"/>
</dbReference>
<dbReference type="PROSITE" id="PS00154">
    <property type="entry name" value="ATPASE_E1_E2"/>
    <property type="match status" value="1"/>
</dbReference>
<sequence length="682" mass="72224">MSRKQLALLEPALVRQALMDAVKKLSPRVQWHNPVMFIVWIGSVVTTALAVAMATGHLAGDAGFTGTISVWLWFTVLFANVAEALAEGRSKAQANSLKGINKTAFARKLREPKYGAQMDHVPADELRKGDVVLVEAGDIIPCDGEVIEGGASVDESAITGESAPVIRESGGDFASVTGGTRILSDWLVVQCSVNPGETFLDRMIAMVEGAQRRKTPNEIALTILLVALTIVFLLATATLWPFSAYGGTAVSVTVLVALLVCLIPTTIGGLLSAIGVAGMSRMLGANVIATSGRAVEAAGDVDVLLLDKTGTITLGNRQASEFLPAPGVDEKTLADAAQLSSLADETPEGRSIVILAKQRFNLRQRDVQSLQATFVPFTAQTRMSGINIQDRMIRKGSVDAIRRHIEANNGHFPPEVDRLVENVARQGATPLVVAEGATVLGVIALKDIVKGGIKERFAQLRKMGIKTVMITGDNRLTAAAIAAEAGVDDFLSEATPEAKLALIRQYQAEGRLVAMTGDGTNDAPALAQADVAVAMNSGTQAAKEAGNMVDLDSNPTKLIEVVHIGKQMLMTRGSLTTFSIANDVAKYFAIIPAAFAATYPQLNALNVMHLHSPASAILSAVIFNALIIVFLIPLALKGVSYKPLTAAAMLRRNLWIYGLGGLVVPFIGIKIIDMLLTVFGLV</sequence>
<keyword id="KW-0067">ATP-binding</keyword>
<keyword id="KW-0997">Cell inner membrane</keyword>
<keyword id="KW-1003">Cell membrane</keyword>
<keyword id="KW-0406">Ion transport</keyword>
<keyword id="KW-0460">Magnesium</keyword>
<keyword id="KW-0472">Membrane</keyword>
<keyword id="KW-0479">Metal-binding</keyword>
<keyword id="KW-0547">Nucleotide-binding</keyword>
<keyword id="KW-0597">Phosphoprotein</keyword>
<keyword id="KW-0630">Potassium</keyword>
<keyword id="KW-0633">Potassium transport</keyword>
<keyword id="KW-1278">Translocase</keyword>
<keyword id="KW-0812">Transmembrane</keyword>
<keyword id="KW-1133">Transmembrane helix</keyword>
<keyword id="KW-0813">Transport</keyword>
<protein>
    <recommendedName>
        <fullName evidence="1">Potassium-transporting ATPase ATP-binding subunit</fullName>
        <ecNumber evidence="1">7.2.2.6</ecNumber>
    </recommendedName>
    <alternativeName>
        <fullName evidence="1">ATP phosphohydrolase [potassium-transporting] B chain</fullName>
    </alternativeName>
    <alternativeName>
        <fullName evidence="1">Potassium-binding and translocating subunit B</fullName>
    </alternativeName>
    <alternativeName>
        <fullName evidence="1">Potassium-translocating ATPase B chain</fullName>
    </alternativeName>
</protein>
<name>KDPB_ENT38</name>
<comment type="function">
    <text evidence="1">Part of the high-affinity ATP-driven potassium transport (or Kdp) system, which catalyzes the hydrolysis of ATP coupled with the electrogenic transport of potassium into the cytoplasm. This subunit is responsible for energy coupling to the transport system and for the release of the potassium ions to the cytoplasm.</text>
</comment>
<comment type="catalytic activity">
    <reaction evidence="1">
        <text>K(+)(out) + ATP + H2O = K(+)(in) + ADP + phosphate + H(+)</text>
        <dbReference type="Rhea" id="RHEA:16777"/>
        <dbReference type="ChEBI" id="CHEBI:15377"/>
        <dbReference type="ChEBI" id="CHEBI:15378"/>
        <dbReference type="ChEBI" id="CHEBI:29103"/>
        <dbReference type="ChEBI" id="CHEBI:30616"/>
        <dbReference type="ChEBI" id="CHEBI:43474"/>
        <dbReference type="ChEBI" id="CHEBI:456216"/>
        <dbReference type="EC" id="7.2.2.6"/>
    </reaction>
    <physiologicalReaction direction="left-to-right" evidence="1">
        <dbReference type="Rhea" id="RHEA:16778"/>
    </physiologicalReaction>
</comment>
<comment type="subunit">
    <text evidence="1">The system is composed of three essential subunits: KdpA, KdpB and KdpC.</text>
</comment>
<comment type="subcellular location">
    <subcellularLocation>
        <location evidence="1">Cell inner membrane</location>
        <topology evidence="1">Multi-pass membrane protein</topology>
    </subcellularLocation>
</comment>
<comment type="similarity">
    <text evidence="1">Belongs to the cation transport ATPase (P-type) (TC 3.A.3) family. Type IA subfamily.</text>
</comment>
<reference key="1">
    <citation type="journal article" date="2010" name="PLoS Genet.">
        <title>Genome sequence of the plant growth promoting endophytic bacterium Enterobacter sp. 638.</title>
        <authorList>
            <person name="Taghavi S."/>
            <person name="van der Lelie D."/>
            <person name="Hoffman A."/>
            <person name="Zhang Y.B."/>
            <person name="Walla M.D."/>
            <person name="Vangronsveld J."/>
            <person name="Newman L."/>
            <person name="Monchy S."/>
        </authorList>
    </citation>
    <scope>NUCLEOTIDE SEQUENCE [LARGE SCALE GENOMIC DNA]</scope>
    <source>
        <strain>638</strain>
    </source>
</reference>
<evidence type="ECO:0000255" key="1">
    <source>
        <dbReference type="HAMAP-Rule" id="MF_00285"/>
    </source>
</evidence>
<gene>
    <name evidence="1" type="primary">kdpB</name>
    <name type="ordered locus">Ent638_1209</name>
</gene>
<proteinExistence type="inferred from homology"/>
<accession>A4W860</accession>